<dbReference type="EC" id="4.1.1.23" evidence="1"/>
<dbReference type="EMBL" id="AM180252">
    <property type="protein sequence ID" value="CAJ54367.1"/>
    <property type="molecule type" value="Genomic_DNA"/>
</dbReference>
<dbReference type="RefSeq" id="WP_011526396.1">
    <property type="nucleotide sequence ID" value="NC_008011.1"/>
</dbReference>
<dbReference type="SMR" id="Q1MRK9"/>
<dbReference type="STRING" id="363253.LI0311"/>
<dbReference type="KEGG" id="lip:LI0311"/>
<dbReference type="eggNOG" id="COG0284">
    <property type="taxonomic scope" value="Bacteria"/>
</dbReference>
<dbReference type="HOGENOM" id="CLU_067069_1_1_7"/>
<dbReference type="OrthoDB" id="9806203at2"/>
<dbReference type="UniPathway" id="UPA00070">
    <property type="reaction ID" value="UER00120"/>
</dbReference>
<dbReference type="Proteomes" id="UP000002430">
    <property type="component" value="Chromosome"/>
</dbReference>
<dbReference type="GO" id="GO:0005829">
    <property type="term" value="C:cytosol"/>
    <property type="evidence" value="ECO:0007669"/>
    <property type="project" value="TreeGrafter"/>
</dbReference>
<dbReference type="GO" id="GO:0004590">
    <property type="term" value="F:orotidine-5'-phosphate decarboxylase activity"/>
    <property type="evidence" value="ECO:0007669"/>
    <property type="project" value="UniProtKB-UniRule"/>
</dbReference>
<dbReference type="GO" id="GO:0006207">
    <property type="term" value="P:'de novo' pyrimidine nucleobase biosynthetic process"/>
    <property type="evidence" value="ECO:0007669"/>
    <property type="project" value="InterPro"/>
</dbReference>
<dbReference type="GO" id="GO:0044205">
    <property type="term" value="P:'de novo' UMP biosynthetic process"/>
    <property type="evidence" value="ECO:0007669"/>
    <property type="project" value="UniProtKB-UniRule"/>
</dbReference>
<dbReference type="CDD" id="cd04725">
    <property type="entry name" value="OMP_decarboxylase_like"/>
    <property type="match status" value="1"/>
</dbReference>
<dbReference type="Gene3D" id="3.20.20.70">
    <property type="entry name" value="Aldolase class I"/>
    <property type="match status" value="1"/>
</dbReference>
<dbReference type="HAMAP" id="MF_01200_B">
    <property type="entry name" value="OMPdecase_type1_B"/>
    <property type="match status" value="1"/>
</dbReference>
<dbReference type="InterPro" id="IPR013785">
    <property type="entry name" value="Aldolase_TIM"/>
</dbReference>
<dbReference type="InterPro" id="IPR014732">
    <property type="entry name" value="OMPdecase"/>
</dbReference>
<dbReference type="InterPro" id="IPR018089">
    <property type="entry name" value="OMPdecase_AS"/>
</dbReference>
<dbReference type="InterPro" id="IPR047596">
    <property type="entry name" value="OMPdecase_bac"/>
</dbReference>
<dbReference type="InterPro" id="IPR001754">
    <property type="entry name" value="OMPdeCOase_dom"/>
</dbReference>
<dbReference type="InterPro" id="IPR011060">
    <property type="entry name" value="RibuloseP-bd_barrel"/>
</dbReference>
<dbReference type="NCBIfam" id="NF001273">
    <property type="entry name" value="PRK00230.1"/>
    <property type="match status" value="1"/>
</dbReference>
<dbReference type="NCBIfam" id="TIGR01740">
    <property type="entry name" value="pyrF"/>
    <property type="match status" value="1"/>
</dbReference>
<dbReference type="PANTHER" id="PTHR32119">
    <property type="entry name" value="OROTIDINE 5'-PHOSPHATE DECARBOXYLASE"/>
    <property type="match status" value="1"/>
</dbReference>
<dbReference type="PANTHER" id="PTHR32119:SF2">
    <property type="entry name" value="OROTIDINE 5'-PHOSPHATE DECARBOXYLASE"/>
    <property type="match status" value="1"/>
</dbReference>
<dbReference type="Pfam" id="PF00215">
    <property type="entry name" value="OMPdecase"/>
    <property type="match status" value="1"/>
</dbReference>
<dbReference type="SMART" id="SM00934">
    <property type="entry name" value="OMPdecase"/>
    <property type="match status" value="1"/>
</dbReference>
<dbReference type="SUPFAM" id="SSF51366">
    <property type="entry name" value="Ribulose-phoshate binding barrel"/>
    <property type="match status" value="1"/>
</dbReference>
<dbReference type="PROSITE" id="PS00156">
    <property type="entry name" value="OMPDECASE"/>
    <property type="match status" value="1"/>
</dbReference>
<name>PYRF_LAWIP</name>
<keyword id="KW-0210">Decarboxylase</keyword>
<keyword id="KW-0456">Lyase</keyword>
<keyword id="KW-0665">Pyrimidine biosynthesis</keyword>
<keyword id="KW-1185">Reference proteome</keyword>
<evidence type="ECO:0000255" key="1">
    <source>
        <dbReference type="HAMAP-Rule" id="MF_01200"/>
    </source>
</evidence>
<proteinExistence type="inferred from homology"/>
<reference key="1">
    <citation type="submission" date="2005-11" db="EMBL/GenBank/DDBJ databases">
        <title>The complete genome sequence of Lawsonia intracellularis: the causative agent of proliferative enteropathy.</title>
        <authorList>
            <person name="Kaur K."/>
            <person name="Zhang Q."/>
            <person name="Beckler D."/>
            <person name="Munir S."/>
            <person name="Li L."/>
            <person name="Kinsley K."/>
            <person name="Herron L."/>
            <person name="Peterson A."/>
            <person name="May B."/>
            <person name="Singh S."/>
            <person name="Gebhart C."/>
            <person name="Kapur V."/>
        </authorList>
    </citation>
    <scope>NUCLEOTIDE SEQUENCE [LARGE SCALE GENOMIC DNA]</scope>
    <source>
        <strain>PHE/MN1-00</strain>
    </source>
</reference>
<gene>
    <name evidence="1" type="primary">pyrF</name>
    <name type="ordered locus">LI0311</name>
</gene>
<sequence>MAKLIVALDYTYASEALAMANILKKHVEWVKVGLELFTHEGPSIIQLLKRMGFKVMLDLKLFDIPNTVKGSVRSACLMDVDMLTLHILGGEHMIKAALNEVQSSIQKKSHSPLLFGVTILTSIKQGELPGYNQDIASMVLNLAAYGQQWGLHGIVCSGQELTKIKALYPSLSCLTPGIRMSYSQKDDQHRVMTPSEAVKAGSDFLVIGRPITQAEQPIKIVEDIISSIM</sequence>
<accession>Q1MRK9</accession>
<comment type="function">
    <text evidence="1">Catalyzes the decarboxylation of orotidine 5'-monophosphate (OMP) to uridine 5'-monophosphate (UMP).</text>
</comment>
<comment type="catalytic activity">
    <reaction evidence="1">
        <text>orotidine 5'-phosphate + H(+) = UMP + CO2</text>
        <dbReference type="Rhea" id="RHEA:11596"/>
        <dbReference type="ChEBI" id="CHEBI:15378"/>
        <dbReference type="ChEBI" id="CHEBI:16526"/>
        <dbReference type="ChEBI" id="CHEBI:57538"/>
        <dbReference type="ChEBI" id="CHEBI:57865"/>
        <dbReference type="EC" id="4.1.1.23"/>
    </reaction>
</comment>
<comment type="pathway">
    <text evidence="1">Pyrimidine metabolism; UMP biosynthesis via de novo pathway; UMP from orotate: step 2/2.</text>
</comment>
<comment type="subunit">
    <text evidence="1">Homodimer.</text>
</comment>
<comment type="similarity">
    <text evidence="1">Belongs to the OMP decarboxylase family. Type 1 subfamily.</text>
</comment>
<organism>
    <name type="scientific">Lawsonia intracellularis (strain PHE/MN1-00)</name>
    <dbReference type="NCBI Taxonomy" id="363253"/>
    <lineage>
        <taxon>Bacteria</taxon>
        <taxon>Pseudomonadati</taxon>
        <taxon>Thermodesulfobacteriota</taxon>
        <taxon>Desulfovibrionia</taxon>
        <taxon>Desulfovibrionales</taxon>
        <taxon>Desulfovibrionaceae</taxon>
        <taxon>Lawsonia</taxon>
    </lineage>
</organism>
<protein>
    <recommendedName>
        <fullName evidence="1">Orotidine 5'-phosphate decarboxylase</fullName>
        <ecNumber evidence="1">4.1.1.23</ecNumber>
    </recommendedName>
    <alternativeName>
        <fullName evidence="1">OMP decarboxylase</fullName>
        <shortName evidence="1">OMPDCase</shortName>
        <shortName evidence="1">OMPdecase</shortName>
    </alternativeName>
</protein>
<feature type="chain" id="PRO_1000138536" description="Orotidine 5'-phosphate decarboxylase">
    <location>
        <begin position="1"/>
        <end position="229"/>
    </location>
</feature>
<feature type="active site" description="Proton donor" evidence="1">
    <location>
        <position position="60"/>
    </location>
</feature>
<feature type="binding site" evidence="1">
    <location>
        <position position="9"/>
    </location>
    <ligand>
        <name>substrate</name>
    </ligand>
</feature>
<feature type="binding site" evidence="1">
    <location>
        <position position="31"/>
    </location>
    <ligand>
        <name>substrate</name>
    </ligand>
</feature>
<feature type="binding site" evidence="1">
    <location>
        <begin position="58"/>
        <end position="67"/>
    </location>
    <ligand>
        <name>substrate</name>
    </ligand>
</feature>
<feature type="binding site" evidence="1">
    <location>
        <position position="121"/>
    </location>
    <ligand>
        <name>substrate</name>
    </ligand>
</feature>
<feature type="binding site" evidence="1">
    <location>
        <position position="179"/>
    </location>
    <ligand>
        <name>substrate</name>
    </ligand>
</feature>
<feature type="binding site" evidence="1">
    <location>
        <position position="188"/>
    </location>
    <ligand>
        <name>substrate</name>
    </ligand>
</feature>
<feature type="binding site" evidence="1">
    <location>
        <position position="208"/>
    </location>
    <ligand>
        <name>substrate</name>
    </ligand>
</feature>
<feature type="binding site" evidence="1">
    <location>
        <position position="209"/>
    </location>
    <ligand>
        <name>substrate</name>
    </ligand>
</feature>